<feature type="chain" id="PRO_0000121174" description="Ras-related protein YPT3">
    <location>
        <begin position="1"/>
        <end position="218"/>
    </location>
</feature>
<feature type="region of interest" description="Disordered" evidence="4">
    <location>
        <begin position="186"/>
        <end position="205"/>
    </location>
</feature>
<feature type="short sequence motif" description="Effector region" evidence="3">
    <location>
        <begin position="42"/>
        <end position="50"/>
    </location>
</feature>
<feature type="binding site" evidence="1">
    <location>
        <begin position="20"/>
        <end position="27"/>
    </location>
    <ligand>
        <name>GTP</name>
        <dbReference type="ChEBI" id="CHEBI:37565"/>
    </ligand>
</feature>
<feature type="binding site" evidence="1">
    <location>
        <begin position="68"/>
        <end position="72"/>
    </location>
    <ligand>
        <name>GTP</name>
        <dbReference type="ChEBI" id="CHEBI:37565"/>
    </ligand>
</feature>
<feature type="binding site" evidence="1">
    <location>
        <begin position="126"/>
        <end position="129"/>
    </location>
    <ligand>
        <name>GTP</name>
        <dbReference type="ChEBI" id="CHEBI:37565"/>
    </ligand>
</feature>
<feature type="lipid moiety-binding region" description="S-geranylgeranyl cysteine" evidence="2">
    <location>
        <position position="215"/>
    </location>
</feature>
<feature type="lipid moiety-binding region" description="S-geranylgeranyl cysteine" evidence="2">
    <location>
        <position position="216"/>
    </location>
</feature>
<name>YPT3_NICPL</name>
<proteinExistence type="evidence at transcript level"/>
<organism>
    <name type="scientific">Nicotiana plumbaginifolia</name>
    <name type="common">Leadwort-leaved tobacco</name>
    <name type="synonym">Tex-Mex tobacco</name>
    <dbReference type="NCBI Taxonomy" id="4092"/>
    <lineage>
        <taxon>Eukaryota</taxon>
        <taxon>Viridiplantae</taxon>
        <taxon>Streptophyta</taxon>
        <taxon>Embryophyta</taxon>
        <taxon>Tracheophyta</taxon>
        <taxon>Spermatophyta</taxon>
        <taxon>Magnoliopsida</taxon>
        <taxon>eudicotyledons</taxon>
        <taxon>Gunneridae</taxon>
        <taxon>Pentapetalae</taxon>
        <taxon>asterids</taxon>
        <taxon>lamiids</taxon>
        <taxon>Solanales</taxon>
        <taxon>Solanaceae</taxon>
        <taxon>Nicotianoideae</taxon>
        <taxon>Nicotianeae</taxon>
        <taxon>Nicotiana</taxon>
    </lineage>
</organism>
<accession>Q01111</accession>
<protein>
    <recommendedName>
        <fullName>Ras-related protein YPT3</fullName>
    </recommendedName>
</protein>
<comment type="function">
    <text evidence="1">Protein transport. Probably involved in vesicular traffic (By similarity).</text>
</comment>
<comment type="subcellular location">
    <subcellularLocation>
        <location evidence="5">Cell membrane</location>
        <topology evidence="5">Lipid-anchor</topology>
        <orientation evidence="5">Cytoplasmic side</orientation>
    </subcellularLocation>
</comment>
<comment type="tissue specificity">
    <text>Its expression is weak in leaves, higher in stems and roots, but highest in petals, stigma and stamens.</text>
</comment>
<comment type="similarity">
    <text evidence="5">Belongs to the small GTPase superfamily. Rab family.</text>
</comment>
<comment type="caution">
    <text evidence="5">This sequence does not have the Cys-Cys motif at the C-terminal as do homologous sequences from yeast species. It may be either geranylgeranylated at an alternative motif or it may be subject to farnesylation on Cys-215.</text>
</comment>
<keyword id="KW-1003">Cell membrane</keyword>
<keyword id="KW-0342">GTP-binding</keyword>
<keyword id="KW-0449">Lipoprotein</keyword>
<keyword id="KW-0472">Membrane</keyword>
<keyword id="KW-0547">Nucleotide-binding</keyword>
<keyword id="KW-0636">Prenylation</keyword>
<keyword id="KW-0653">Protein transport</keyword>
<keyword id="KW-0813">Transport</keyword>
<dbReference type="EMBL" id="X63874">
    <property type="protein sequence ID" value="CAA45351.1"/>
    <property type="molecule type" value="mRNA"/>
</dbReference>
<dbReference type="PIR" id="S23523">
    <property type="entry name" value="S23523"/>
</dbReference>
<dbReference type="SMR" id="Q01111"/>
<dbReference type="GO" id="GO:0005886">
    <property type="term" value="C:plasma membrane"/>
    <property type="evidence" value="ECO:0007669"/>
    <property type="project" value="UniProtKB-SubCell"/>
</dbReference>
<dbReference type="GO" id="GO:0005525">
    <property type="term" value="F:GTP binding"/>
    <property type="evidence" value="ECO:0007669"/>
    <property type="project" value="UniProtKB-KW"/>
</dbReference>
<dbReference type="GO" id="GO:0003924">
    <property type="term" value="F:GTPase activity"/>
    <property type="evidence" value="ECO:0007669"/>
    <property type="project" value="InterPro"/>
</dbReference>
<dbReference type="GO" id="GO:0015031">
    <property type="term" value="P:protein transport"/>
    <property type="evidence" value="ECO:0007669"/>
    <property type="project" value="UniProtKB-KW"/>
</dbReference>
<dbReference type="CDD" id="cd01868">
    <property type="entry name" value="Rab11_like"/>
    <property type="match status" value="1"/>
</dbReference>
<dbReference type="FunFam" id="3.40.50.300:FF:000067">
    <property type="entry name" value="ras-related protein RABA1f"/>
    <property type="match status" value="1"/>
</dbReference>
<dbReference type="Gene3D" id="3.40.50.300">
    <property type="entry name" value="P-loop containing nucleotide triphosphate hydrolases"/>
    <property type="match status" value="1"/>
</dbReference>
<dbReference type="InterPro" id="IPR027417">
    <property type="entry name" value="P-loop_NTPase"/>
</dbReference>
<dbReference type="InterPro" id="IPR050209">
    <property type="entry name" value="Rab_GTPases_membrane_traffic"/>
</dbReference>
<dbReference type="InterPro" id="IPR005225">
    <property type="entry name" value="Small_GTP-bd"/>
</dbReference>
<dbReference type="InterPro" id="IPR001806">
    <property type="entry name" value="Small_GTPase"/>
</dbReference>
<dbReference type="NCBIfam" id="TIGR00231">
    <property type="entry name" value="small_GTP"/>
    <property type="match status" value="1"/>
</dbReference>
<dbReference type="PANTHER" id="PTHR47979">
    <property type="entry name" value="DRAB11-RELATED"/>
    <property type="match status" value="1"/>
</dbReference>
<dbReference type="Pfam" id="PF00071">
    <property type="entry name" value="Ras"/>
    <property type="match status" value="1"/>
</dbReference>
<dbReference type="PRINTS" id="PR00449">
    <property type="entry name" value="RASTRNSFRMNG"/>
</dbReference>
<dbReference type="SMART" id="SM00175">
    <property type="entry name" value="RAB"/>
    <property type="match status" value="1"/>
</dbReference>
<dbReference type="SMART" id="SM00176">
    <property type="entry name" value="RAN"/>
    <property type="match status" value="1"/>
</dbReference>
<dbReference type="SMART" id="SM00173">
    <property type="entry name" value="RAS"/>
    <property type="match status" value="1"/>
</dbReference>
<dbReference type="SMART" id="SM00174">
    <property type="entry name" value="RHO"/>
    <property type="match status" value="1"/>
</dbReference>
<dbReference type="SUPFAM" id="SSF52540">
    <property type="entry name" value="P-loop containing nucleoside triphosphate hydrolases"/>
    <property type="match status" value="1"/>
</dbReference>
<dbReference type="PROSITE" id="PS51419">
    <property type="entry name" value="RAB"/>
    <property type="match status" value="1"/>
</dbReference>
<gene>
    <name type="primary">YPT3</name>
</gene>
<sequence length="218" mass="24183">MAGYRADDEYDYLFKLVLIGDSGVGKSNLLSRFTKNEFNLESKSTIGVEFATKSLNIDNKVIKAQIWDTAGQERYRAITSAYYRGAVGALLVYDVTRHVTYENVTRWLKELRDHTDPNIVVMLIGNKSDLRHLVAVSTDEAKGLAEREGLYFMETSALEATNVENAFTEALTQIYRIVSKKAVEAGDEGATSSAPPKGETINIKDEGSSWKKFGCCSS</sequence>
<reference key="1">
    <citation type="journal article" date="1992" name="Plant Mol. Biol.">
        <title>Molecular characterization of tobacco cDNAs encoding two small GTP-binding proteins.</title>
        <authorList>
            <person name="Dallmann G."/>
            <person name="Sticher L."/>
            <person name="Marshallsay C."/>
            <person name="Nagy F."/>
        </authorList>
    </citation>
    <scope>NUCLEOTIDE SEQUENCE [MRNA]</scope>
    <source>
        <tissue>Leaf</tissue>
    </source>
</reference>
<evidence type="ECO:0000250" key="1"/>
<evidence type="ECO:0000250" key="2">
    <source>
        <dbReference type="UniProtKB" id="P17610"/>
    </source>
</evidence>
<evidence type="ECO:0000255" key="3"/>
<evidence type="ECO:0000256" key="4">
    <source>
        <dbReference type="SAM" id="MobiDB-lite"/>
    </source>
</evidence>
<evidence type="ECO:0000305" key="5"/>